<gene>
    <name evidence="1" type="primary">purA</name>
    <name type="ordered locus">PBPRA3345</name>
</gene>
<reference key="1">
    <citation type="journal article" date="2005" name="Science">
        <title>Life at depth: Photobacterium profundum genome sequence and expression analysis.</title>
        <authorList>
            <person name="Vezzi A."/>
            <person name="Campanaro S."/>
            <person name="D'Angelo M."/>
            <person name="Simonato F."/>
            <person name="Vitulo N."/>
            <person name="Lauro F.M."/>
            <person name="Cestaro A."/>
            <person name="Malacrida G."/>
            <person name="Simionati B."/>
            <person name="Cannata N."/>
            <person name="Romualdi C."/>
            <person name="Bartlett D.H."/>
            <person name="Valle G."/>
        </authorList>
    </citation>
    <scope>NUCLEOTIDE SEQUENCE [LARGE SCALE GENOMIC DNA]</scope>
    <source>
        <strain>ATCC BAA-1253 / SS9</strain>
    </source>
</reference>
<sequence>MANNVVVLGTQWGDEGKGKIVDLLTEDAKYVVRYQGGHNAGHTLVIDGEKTVLHLIPSGILRNNVKCIIGNGVVLSPDALMKEMGPLEARGIPVRERLFLSEACPLILPYHIALDQAREIARGKKAIGTTGRGIGPAYEDKVARRGLRVGDLFDKEAFAEKLKEVMAYHNFQLEHYYNAEPVSYDEVLASVMAQADVLTAMVIDVTQELDDARKRGDKIMFEGAQGTLLDIDHGTYPYVTSSNTTAGGVAAGSGFGPRHLGYILGIAKAYCTRVGAGPFPTELDDAVGEHLGVKGNEFGATTGRKRRCGWFDAVAMRRAVQINSISGFCLTKLDVMDGLKEIKICTGYKTQDGKTLSVSPMAADAYENLELIYETMPGWSENTFGAKTLDALPQAALDYIARIEELTGVPIDIVSTGPDRNETIIKVHPYGE</sequence>
<dbReference type="EC" id="6.3.4.4" evidence="1"/>
<dbReference type="EMBL" id="CR378673">
    <property type="protein sequence ID" value="CAG21643.1"/>
    <property type="molecule type" value="Genomic_DNA"/>
</dbReference>
<dbReference type="RefSeq" id="WP_011219889.1">
    <property type="nucleotide sequence ID" value="NC_006370.1"/>
</dbReference>
<dbReference type="SMR" id="Q6LM35"/>
<dbReference type="STRING" id="298386.PBPRA3345"/>
<dbReference type="KEGG" id="ppr:PBPRA3345"/>
<dbReference type="eggNOG" id="COG0104">
    <property type="taxonomic scope" value="Bacteria"/>
</dbReference>
<dbReference type="HOGENOM" id="CLU_029848_0_0_6"/>
<dbReference type="UniPathway" id="UPA00075">
    <property type="reaction ID" value="UER00335"/>
</dbReference>
<dbReference type="Proteomes" id="UP000000593">
    <property type="component" value="Chromosome 1"/>
</dbReference>
<dbReference type="GO" id="GO:0005737">
    <property type="term" value="C:cytoplasm"/>
    <property type="evidence" value="ECO:0007669"/>
    <property type="project" value="UniProtKB-SubCell"/>
</dbReference>
<dbReference type="GO" id="GO:0004019">
    <property type="term" value="F:adenylosuccinate synthase activity"/>
    <property type="evidence" value="ECO:0007669"/>
    <property type="project" value="UniProtKB-UniRule"/>
</dbReference>
<dbReference type="GO" id="GO:0005525">
    <property type="term" value="F:GTP binding"/>
    <property type="evidence" value="ECO:0007669"/>
    <property type="project" value="UniProtKB-UniRule"/>
</dbReference>
<dbReference type="GO" id="GO:0000287">
    <property type="term" value="F:magnesium ion binding"/>
    <property type="evidence" value="ECO:0007669"/>
    <property type="project" value="UniProtKB-UniRule"/>
</dbReference>
<dbReference type="GO" id="GO:0044208">
    <property type="term" value="P:'de novo' AMP biosynthetic process"/>
    <property type="evidence" value="ECO:0007669"/>
    <property type="project" value="UniProtKB-UniRule"/>
</dbReference>
<dbReference type="GO" id="GO:0046040">
    <property type="term" value="P:IMP metabolic process"/>
    <property type="evidence" value="ECO:0007669"/>
    <property type="project" value="TreeGrafter"/>
</dbReference>
<dbReference type="CDD" id="cd03108">
    <property type="entry name" value="AdSS"/>
    <property type="match status" value="1"/>
</dbReference>
<dbReference type="FunFam" id="1.10.300.10:FF:000001">
    <property type="entry name" value="Adenylosuccinate synthetase"/>
    <property type="match status" value="1"/>
</dbReference>
<dbReference type="FunFam" id="3.90.170.10:FF:000001">
    <property type="entry name" value="Adenylosuccinate synthetase"/>
    <property type="match status" value="1"/>
</dbReference>
<dbReference type="Gene3D" id="3.40.440.10">
    <property type="entry name" value="Adenylosuccinate Synthetase, subunit A, domain 1"/>
    <property type="match status" value="1"/>
</dbReference>
<dbReference type="Gene3D" id="1.10.300.10">
    <property type="entry name" value="Adenylosuccinate Synthetase, subunit A, domain 2"/>
    <property type="match status" value="1"/>
</dbReference>
<dbReference type="Gene3D" id="3.90.170.10">
    <property type="entry name" value="Adenylosuccinate Synthetase, subunit A, domain 3"/>
    <property type="match status" value="1"/>
</dbReference>
<dbReference type="HAMAP" id="MF_00011">
    <property type="entry name" value="Adenylosucc_synth"/>
    <property type="match status" value="1"/>
</dbReference>
<dbReference type="InterPro" id="IPR018220">
    <property type="entry name" value="Adenylosuccin_syn_GTP-bd"/>
</dbReference>
<dbReference type="InterPro" id="IPR033128">
    <property type="entry name" value="Adenylosuccin_syn_Lys_AS"/>
</dbReference>
<dbReference type="InterPro" id="IPR042109">
    <property type="entry name" value="Adenylosuccinate_synth_dom1"/>
</dbReference>
<dbReference type="InterPro" id="IPR042110">
    <property type="entry name" value="Adenylosuccinate_synth_dom2"/>
</dbReference>
<dbReference type="InterPro" id="IPR042111">
    <property type="entry name" value="Adenylosuccinate_synth_dom3"/>
</dbReference>
<dbReference type="InterPro" id="IPR001114">
    <property type="entry name" value="Adenylosuccinate_synthetase"/>
</dbReference>
<dbReference type="InterPro" id="IPR027417">
    <property type="entry name" value="P-loop_NTPase"/>
</dbReference>
<dbReference type="NCBIfam" id="NF002223">
    <property type="entry name" value="PRK01117.1"/>
    <property type="match status" value="1"/>
</dbReference>
<dbReference type="NCBIfam" id="TIGR00184">
    <property type="entry name" value="purA"/>
    <property type="match status" value="1"/>
</dbReference>
<dbReference type="PANTHER" id="PTHR11846">
    <property type="entry name" value="ADENYLOSUCCINATE SYNTHETASE"/>
    <property type="match status" value="1"/>
</dbReference>
<dbReference type="PANTHER" id="PTHR11846:SF0">
    <property type="entry name" value="ADENYLOSUCCINATE SYNTHETASE"/>
    <property type="match status" value="1"/>
</dbReference>
<dbReference type="Pfam" id="PF00709">
    <property type="entry name" value="Adenylsucc_synt"/>
    <property type="match status" value="1"/>
</dbReference>
<dbReference type="SMART" id="SM00788">
    <property type="entry name" value="Adenylsucc_synt"/>
    <property type="match status" value="1"/>
</dbReference>
<dbReference type="SUPFAM" id="SSF52540">
    <property type="entry name" value="P-loop containing nucleoside triphosphate hydrolases"/>
    <property type="match status" value="1"/>
</dbReference>
<dbReference type="PROSITE" id="PS01266">
    <property type="entry name" value="ADENYLOSUCCIN_SYN_1"/>
    <property type="match status" value="1"/>
</dbReference>
<dbReference type="PROSITE" id="PS00513">
    <property type="entry name" value="ADENYLOSUCCIN_SYN_2"/>
    <property type="match status" value="1"/>
</dbReference>
<proteinExistence type="inferred from homology"/>
<feature type="chain" id="PRO_0000224302" description="Adenylosuccinate synthetase">
    <location>
        <begin position="1"/>
        <end position="432"/>
    </location>
</feature>
<feature type="active site" description="Proton acceptor" evidence="1">
    <location>
        <position position="14"/>
    </location>
</feature>
<feature type="active site" description="Proton donor" evidence="1">
    <location>
        <position position="42"/>
    </location>
</feature>
<feature type="binding site" evidence="1">
    <location>
        <begin position="13"/>
        <end position="19"/>
    </location>
    <ligand>
        <name>GTP</name>
        <dbReference type="ChEBI" id="CHEBI:37565"/>
    </ligand>
</feature>
<feature type="binding site" description="in other chain" evidence="1">
    <location>
        <begin position="14"/>
        <end position="17"/>
    </location>
    <ligand>
        <name>IMP</name>
        <dbReference type="ChEBI" id="CHEBI:58053"/>
        <note>ligand shared between dimeric partners</note>
    </ligand>
</feature>
<feature type="binding site" evidence="1">
    <location>
        <position position="14"/>
    </location>
    <ligand>
        <name>Mg(2+)</name>
        <dbReference type="ChEBI" id="CHEBI:18420"/>
    </ligand>
</feature>
<feature type="binding site" description="in other chain" evidence="1">
    <location>
        <begin position="39"/>
        <end position="42"/>
    </location>
    <ligand>
        <name>IMP</name>
        <dbReference type="ChEBI" id="CHEBI:58053"/>
        <note>ligand shared between dimeric partners</note>
    </ligand>
</feature>
<feature type="binding site" evidence="1">
    <location>
        <begin position="41"/>
        <end position="43"/>
    </location>
    <ligand>
        <name>GTP</name>
        <dbReference type="ChEBI" id="CHEBI:37565"/>
    </ligand>
</feature>
<feature type="binding site" evidence="1">
    <location>
        <position position="41"/>
    </location>
    <ligand>
        <name>Mg(2+)</name>
        <dbReference type="ChEBI" id="CHEBI:18420"/>
    </ligand>
</feature>
<feature type="binding site" description="in other chain" evidence="1">
    <location>
        <position position="130"/>
    </location>
    <ligand>
        <name>IMP</name>
        <dbReference type="ChEBI" id="CHEBI:58053"/>
        <note>ligand shared between dimeric partners</note>
    </ligand>
</feature>
<feature type="binding site" evidence="1">
    <location>
        <position position="144"/>
    </location>
    <ligand>
        <name>IMP</name>
        <dbReference type="ChEBI" id="CHEBI:58053"/>
        <note>ligand shared between dimeric partners</note>
    </ligand>
</feature>
<feature type="binding site" description="in other chain" evidence="1">
    <location>
        <position position="225"/>
    </location>
    <ligand>
        <name>IMP</name>
        <dbReference type="ChEBI" id="CHEBI:58053"/>
        <note>ligand shared between dimeric partners</note>
    </ligand>
</feature>
<feature type="binding site" description="in other chain" evidence="1">
    <location>
        <position position="240"/>
    </location>
    <ligand>
        <name>IMP</name>
        <dbReference type="ChEBI" id="CHEBI:58053"/>
        <note>ligand shared between dimeric partners</note>
    </ligand>
</feature>
<feature type="binding site" evidence="1">
    <location>
        <begin position="300"/>
        <end position="306"/>
    </location>
    <ligand>
        <name>substrate</name>
    </ligand>
</feature>
<feature type="binding site" description="in other chain" evidence="1">
    <location>
        <position position="304"/>
    </location>
    <ligand>
        <name>IMP</name>
        <dbReference type="ChEBI" id="CHEBI:58053"/>
        <note>ligand shared between dimeric partners</note>
    </ligand>
</feature>
<feature type="binding site" evidence="1">
    <location>
        <position position="306"/>
    </location>
    <ligand>
        <name>GTP</name>
        <dbReference type="ChEBI" id="CHEBI:37565"/>
    </ligand>
</feature>
<feature type="binding site" evidence="1">
    <location>
        <begin position="332"/>
        <end position="334"/>
    </location>
    <ligand>
        <name>GTP</name>
        <dbReference type="ChEBI" id="CHEBI:37565"/>
    </ligand>
</feature>
<feature type="binding site" evidence="1">
    <location>
        <begin position="415"/>
        <end position="417"/>
    </location>
    <ligand>
        <name>GTP</name>
        <dbReference type="ChEBI" id="CHEBI:37565"/>
    </ligand>
</feature>
<comment type="function">
    <text evidence="1">Plays an important role in the de novo pathway of purine nucleotide biosynthesis. Catalyzes the first committed step in the biosynthesis of AMP from IMP.</text>
</comment>
<comment type="catalytic activity">
    <reaction evidence="1">
        <text>IMP + L-aspartate + GTP = N(6)-(1,2-dicarboxyethyl)-AMP + GDP + phosphate + 2 H(+)</text>
        <dbReference type="Rhea" id="RHEA:15753"/>
        <dbReference type="ChEBI" id="CHEBI:15378"/>
        <dbReference type="ChEBI" id="CHEBI:29991"/>
        <dbReference type="ChEBI" id="CHEBI:37565"/>
        <dbReference type="ChEBI" id="CHEBI:43474"/>
        <dbReference type="ChEBI" id="CHEBI:57567"/>
        <dbReference type="ChEBI" id="CHEBI:58053"/>
        <dbReference type="ChEBI" id="CHEBI:58189"/>
        <dbReference type="EC" id="6.3.4.4"/>
    </reaction>
</comment>
<comment type="cofactor">
    <cofactor evidence="1">
        <name>Mg(2+)</name>
        <dbReference type="ChEBI" id="CHEBI:18420"/>
    </cofactor>
    <text evidence="1">Binds 1 Mg(2+) ion per subunit.</text>
</comment>
<comment type="pathway">
    <text evidence="1">Purine metabolism; AMP biosynthesis via de novo pathway; AMP from IMP: step 1/2.</text>
</comment>
<comment type="subunit">
    <text evidence="1">Homodimer.</text>
</comment>
<comment type="subcellular location">
    <subcellularLocation>
        <location evidence="1">Cytoplasm</location>
    </subcellularLocation>
</comment>
<comment type="similarity">
    <text evidence="1">Belongs to the adenylosuccinate synthetase family.</text>
</comment>
<evidence type="ECO:0000255" key="1">
    <source>
        <dbReference type="HAMAP-Rule" id="MF_00011"/>
    </source>
</evidence>
<protein>
    <recommendedName>
        <fullName evidence="1">Adenylosuccinate synthetase</fullName>
        <shortName evidence="1">AMPSase</shortName>
        <shortName evidence="1">AdSS</shortName>
        <ecNumber evidence="1">6.3.4.4</ecNumber>
    </recommendedName>
    <alternativeName>
        <fullName evidence="1">IMP--aspartate ligase</fullName>
    </alternativeName>
</protein>
<accession>Q6LM35</accession>
<organism>
    <name type="scientific">Photobacterium profundum (strain SS9)</name>
    <dbReference type="NCBI Taxonomy" id="298386"/>
    <lineage>
        <taxon>Bacteria</taxon>
        <taxon>Pseudomonadati</taxon>
        <taxon>Pseudomonadota</taxon>
        <taxon>Gammaproteobacteria</taxon>
        <taxon>Vibrionales</taxon>
        <taxon>Vibrionaceae</taxon>
        <taxon>Photobacterium</taxon>
    </lineage>
</organism>
<name>PURA_PHOPR</name>
<keyword id="KW-0963">Cytoplasm</keyword>
<keyword id="KW-0342">GTP-binding</keyword>
<keyword id="KW-0436">Ligase</keyword>
<keyword id="KW-0460">Magnesium</keyword>
<keyword id="KW-0479">Metal-binding</keyword>
<keyword id="KW-0547">Nucleotide-binding</keyword>
<keyword id="KW-0658">Purine biosynthesis</keyword>
<keyword id="KW-1185">Reference proteome</keyword>